<evidence type="ECO:0000255" key="1">
    <source>
        <dbReference type="HAMAP-Rule" id="MF_00643"/>
    </source>
</evidence>
<proteinExistence type="inferred from homology"/>
<dbReference type="EMBL" id="CP000110">
    <property type="protein sequence ID" value="ABB33975.1"/>
    <property type="molecule type" value="Genomic_DNA"/>
</dbReference>
<dbReference type="RefSeq" id="WP_006851435.1">
    <property type="nucleotide sequence ID" value="NC_007516.1"/>
</dbReference>
<dbReference type="SMR" id="Q3AN57"/>
<dbReference type="STRING" id="110662.Syncc9605_0199"/>
<dbReference type="KEGG" id="syd:Syncc9605_0199"/>
<dbReference type="eggNOG" id="ENOG50332KX">
    <property type="taxonomic scope" value="Bacteria"/>
</dbReference>
<dbReference type="HOGENOM" id="CLU_211753_1_0_3"/>
<dbReference type="OrthoDB" id="532613at2"/>
<dbReference type="GO" id="GO:0009539">
    <property type="term" value="C:photosystem II reaction center"/>
    <property type="evidence" value="ECO:0007669"/>
    <property type="project" value="InterPro"/>
</dbReference>
<dbReference type="GO" id="GO:0031676">
    <property type="term" value="C:plasma membrane-derived thylakoid membrane"/>
    <property type="evidence" value="ECO:0007669"/>
    <property type="project" value="UniProtKB-SubCell"/>
</dbReference>
<dbReference type="GO" id="GO:0009055">
    <property type="term" value="F:electron transfer activity"/>
    <property type="evidence" value="ECO:0007669"/>
    <property type="project" value="UniProtKB-UniRule"/>
</dbReference>
<dbReference type="GO" id="GO:0020037">
    <property type="term" value="F:heme binding"/>
    <property type="evidence" value="ECO:0007669"/>
    <property type="project" value="InterPro"/>
</dbReference>
<dbReference type="GO" id="GO:0005506">
    <property type="term" value="F:iron ion binding"/>
    <property type="evidence" value="ECO:0007669"/>
    <property type="project" value="UniProtKB-UniRule"/>
</dbReference>
<dbReference type="GO" id="GO:0009767">
    <property type="term" value="P:photosynthetic electron transport chain"/>
    <property type="evidence" value="ECO:0007669"/>
    <property type="project" value="InterPro"/>
</dbReference>
<dbReference type="HAMAP" id="MF_00643">
    <property type="entry name" value="PSII_PsbF"/>
    <property type="match status" value="1"/>
</dbReference>
<dbReference type="InterPro" id="IPR006241">
    <property type="entry name" value="PSII_cyt_b559_bsu"/>
</dbReference>
<dbReference type="InterPro" id="IPR006216">
    <property type="entry name" value="PSII_cyt_b559_CS"/>
</dbReference>
<dbReference type="InterPro" id="IPR013081">
    <property type="entry name" value="PSII_cyt_b559_N"/>
</dbReference>
<dbReference type="NCBIfam" id="TIGR01333">
    <property type="entry name" value="cyt_b559_beta"/>
    <property type="match status" value="1"/>
</dbReference>
<dbReference type="Pfam" id="PF00283">
    <property type="entry name" value="Cytochrom_B559"/>
    <property type="match status" value="1"/>
</dbReference>
<dbReference type="PIRSF" id="PIRSF000037">
    <property type="entry name" value="PsbF"/>
    <property type="match status" value="1"/>
</dbReference>
<dbReference type="SUPFAM" id="SSF161045">
    <property type="entry name" value="Cytochrome b559 subunits"/>
    <property type="match status" value="1"/>
</dbReference>
<dbReference type="PROSITE" id="PS00537">
    <property type="entry name" value="CYTOCHROME_B559"/>
    <property type="match status" value="1"/>
</dbReference>
<sequence>MTQAPPVATTPRNYPIFTVRWLALHTLGIPTVFFLGALAAMQFIRR</sequence>
<accession>Q3AN57</accession>
<protein>
    <recommendedName>
        <fullName evidence="1">Cytochrome b559 subunit beta</fullName>
    </recommendedName>
    <alternativeName>
        <fullName evidence="1">PSII reaction center subunit VI</fullName>
    </alternativeName>
</protein>
<name>PSBF_SYNSC</name>
<reference key="1">
    <citation type="submission" date="2005-07" db="EMBL/GenBank/DDBJ databases">
        <title>Complete sequence of Synechococcus sp. CC9605.</title>
        <authorList>
            <consortium name="US DOE Joint Genome Institute"/>
            <person name="Copeland A."/>
            <person name="Lucas S."/>
            <person name="Lapidus A."/>
            <person name="Barry K."/>
            <person name="Detter J.C."/>
            <person name="Glavina T."/>
            <person name="Hammon N."/>
            <person name="Israni S."/>
            <person name="Pitluck S."/>
            <person name="Schmutz J."/>
            <person name="Martinez M."/>
            <person name="Larimer F."/>
            <person name="Land M."/>
            <person name="Kyrpides N."/>
            <person name="Ivanova N."/>
            <person name="Richardson P."/>
        </authorList>
    </citation>
    <scope>NUCLEOTIDE SEQUENCE [LARGE SCALE GENOMIC DNA]</scope>
    <source>
        <strain>CC9605</strain>
    </source>
</reference>
<organism>
    <name type="scientific">Synechococcus sp. (strain CC9605)</name>
    <dbReference type="NCBI Taxonomy" id="110662"/>
    <lineage>
        <taxon>Bacteria</taxon>
        <taxon>Bacillati</taxon>
        <taxon>Cyanobacteriota</taxon>
        <taxon>Cyanophyceae</taxon>
        <taxon>Synechococcales</taxon>
        <taxon>Synechococcaceae</taxon>
        <taxon>Synechococcus</taxon>
    </lineage>
</organism>
<gene>
    <name evidence="1" type="primary">psbF</name>
    <name type="ordered locus">Syncc9605_0199</name>
</gene>
<feature type="chain" id="PRO_0000233659" description="Cytochrome b559 subunit beta">
    <location>
        <begin position="1"/>
        <end position="46"/>
    </location>
</feature>
<feature type="transmembrane region" description="Helical" evidence="1">
    <location>
        <begin position="21"/>
        <end position="37"/>
    </location>
</feature>
<feature type="binding site" description="axial binding residue" evidence="1">
    <location>
        <position position="25"/>
    </location>
    <ligand>
        <name>heme</name>
        <dbReference type="ChEBI" id="CHEBI:30413"/>
        <note>ligand shared with alpha subunit</note>
    </ligand>
    <ligandPart>
        <name>Fe</name>
        <dbReference type="ChEBI" id="CHEBI:18248"/>
    </ligandPart>
</feature>
<keyword id="KW-0249">Electron transport</keyword>
<keyword id="KW-0349">Heme</keyword>
<keyword id="KW-0408">Iron</keyword>
<keyword id="KW-0472">Membrane</keyword>
<keyword id="KW-0479">Metal-binding</keyword>
<keyword id="KW-0602">Photosynthesis</keyword>
<keyword id="KW-0604">Photosystem II</keyword>
<keyword id="KW-0793">Thylakoid</keyword>
<keyword id="KW-0812">Transmembrane</keyword>
<keyword id="KW-1133">Transmembrane helix</keyword>
<keyword id="KW-0813">Transport</keyword>
<comment type="function">
    <text evidence="1">This b-type cytochrome is tightly associated with the reaction center of photosystem II (PSII). PSII is a light-driven water:plastoquinone oxidoreductase that uses light energy to abstract electrons from H(2)O, generating O(2) and a proton gradient subsequently used for ATP formation. It consists of a core antenna complex that captures photons, and an electron transfer chain that converts photonic excitation into a charge separation.</text>
</comment>
<comment type="cofactor">
    <cofactor evidence="1">
        <name>heme b</name>
        <dbReference type="ChEBI" id="CHEBI:60344"/>
    </cofactor>
    <text evidence="1">With its partner (PsbE) binds heme. PSII binds additional chlorophylls, carotenoids and specific lipids.</text>
</comment>
<comment type="subunit">
    <text evidence="1">Heterodimer of an alpha subunit and a beta subunit. PSII is composed of 1 copy each of membrane proteins PsbA, PsbB, PsbC, PsbD, PsbE, PsbF, PsbH, PsbI, PsbJ, PsbK, PsbL, PsbM, PsbT, PsbX, PsbY, PsbZ, Psb30/Ycf12, peripheral proteins PsbO, CyanoQ (PsbQ), PsbU, PsbV and a large number of cofactors. It forms dimeric complexes.</text>
</comment>
<comment type="subcellular location">
    <subcellularLocation>
        <location evidence="1">Cellular thylakoid membrane</location>
        <topology evidence="1">Single-pass membrane protein</topology>
    </subcellularLocation>
</comment>
<comment type="similarity">
    <text evidence="1">Belongs to the PsbE/PsbF family.</text>
</comment>